<keyword id="KW-0021">Allosteric enzyme</keyword>
<keyword id="KW-0328">Glycosyltransferase</keyword>
<keyword id="KW-0342">GTP-binding</keyword>
<keyword id="KW-0460">Magnesium</keyword>
<keyword id="KW-0547">Nucleotide-binding</keyword>
<keyword id="KW-1185">Reference proteome</keyword>
<keyword id="KW-0808">Transferase</keyword>
<gene>
    <name evidence="1" type="primary">upp</name>
    <name type="ordered locus">Sfri_1453</name>
</gene>
<dbReference type="EC" id="2.4.2.9" evidence="1"/>
<dbReference type="EMBL" id="CP000447">
    <property type="protein sequence ID" value="ABI71305.1"/>
    <property type="molecule type" value="Genomic_DNA"/>
</dbReference>
<dbReference type="RefSeq" id="WP_011636926.1">
    <property type="nucleotide sequence ID" value="NC_008345.1"/>
</dbReference>
<dbReference type="SMR" id="Q084L0"/>
<dbReference type="STRING" id="318167.Sfri_1453"/>
<dbReference type="KEGG" id="sfr:Sfri_1453"/>
<dbReference type="eggNOG" id="COG0035">
    <property type="taxonomic scope" value="Bacteria"/>
</dbReference>
<dbReference type="HOGENOM" id="CLU_067096_2_2_6"/>
<dbReference type="OrthoDB" id="9781675at2"/>
<dbReference type="UniPathway" id="UPA00574">
    <property type="reaction ID" value="UER00636"/>
</dbReference>
<dbReference type="Proteomes" id="UP000000684">
    <property type="component" value="Chromosome"/>
</dbReference>
<dbReference type="GO" id="GO:0005525">
    <property type="term" value="F:GTP binding"/>
    <property type="evidence" value="ECO:0007669"/>
    <property type="project" value="UniProtKB-KW"/>
</dbReference>
<dbReference type="GO" id="GO:0000287">
    <property type="term" value="F:magnesium ion binding"/>
    <property type="evidence" value="ECO:0007669"/>
    <property type="project" value="UniProtKB-UniRule"/>
</dbReference>
<dbReference type="GO" id="GO:0004845">
    <property type="term" value="F:uracil phosphoribosyltransferase activity"/>
    <property type="evidence" value="ECO:0007669"/>
    <property type="project" value="UniProtKB-UniRule"/>
</dbReference>
<dbReference type="GO" id="GO:0044206">
    <property type="term" value="P:UMP salvage"/>
    <property type="evidence" value="ECO:0007669"/>
    <property type="project" value="UniProtKB-UniRule"/>
</dbReference>
<dbReference type="GO" id="GO:0006223">
    <property type="term" value="P:uracil salvage"/>
    <property type="evidence" value="ECO:0007669"/>
    <property type="project" value="InterPro"/>
</dbReference>
<dbReference type="CDD" id="cd06223">
    <property type="entry name" value="PRTases_typeI"/>
    <property type="match status" value="1"/>
</dbReference>
<dbReference type="FunFam" id="3.40.50.2020:FF:000003">
    <property type="entry name" value="Uracil phosphoribosyltransferase"/>
    <property type="match status" value="1"/>
</dbReference>
<dbReference type="Gene3D" id="3.40.50.2020">
    <property type="match status" value="1"/>
</dbReference>
<dbReference type="HAMAP" id="MF_01218_B">
    <property type="entry name" value="Upp_B"/>
    <property type="match status" value="1"/>
</dbReference>
<dbReference type="InterPro" id="IPR000836">
    <property type="entry name" value="PRibTrfase_dom"/>
</dbReference>
<dbReference type="InterPro" id="IPR029057">
    <property type="entry name" value="PRTase-like"/>
</dbReference>
<dbReference type="InterPro" id="IPR034332">
    <property type="entry name" value="Upp_B"/>
</dbReference>
<dbReference type="InterPro" id="IPR050054">
    <property type="entry name" value="UPRTase/APRTase"/>
</dbReference>
<dbReference type="InterPro" id="IPR005765">
    <property type="entry name" value="Ura_phspho_trans"/>
</dbReference>
<dbReference type="NCBIfam" id="NF001097">
    <property type="entry name" value="PRK00129.1"/>
    <property type="match status" value="1"/>
</dbReference>
<dbReference type="NCBIfam" id="TIGR01091">
    <property type="entry name" value="upp"/>
    <property type="match status" value="1"/>
</dbReference>
<dbReference type="PANTHER" id="PTHR32315">
    <property type="entry name" value="ADENINE PHOSPHORIBOSYLTRANSFERASE"/>
    <property type="match status" value="1"/>
</dbReference>
<dbReference type="PANTHER" id="PTHR32315:SF4">
    <property type="entry name" value="URACIL PHOSPHORIBOSYLTRANSFERASE, CHLOROPLASTIC"/>
    <property type="match status" value="1"/>
</dbReference>
<dbReference type="Pfam" id="PF14681">
    <property type="entry name" value="UPRTase"/>
    <property type="match status" value="1"/>
</dbReference>
<dbReference type="SUPFAM" id="SSF53271">
    <property type="entry name" value="PRTase-like"/>
    <property type="match status" value="1"/>
</dbReference>
<sequence length="208" mass="22626">MKVVEVKHPLVRHKVGLMREADISTKRFRELATEVGSLLTYEATADFETETVTIEGWNGPVTIEQLKGKKVTVVPILRAGLGMMDGVLEHLPSARISVVGIYRDEETLQPVPYFEKIVSNVDERIALVVDPMLATGGSMIATIDLLKKRGCTSIKALVLVAAPEGIKALELAHPDIELYTASIDDCLNEQGYILPGLGDAGDKIFGTK</sequence>
<proteinExistence type="inferred from homology"/>
<feature type="chain" id="PRO_1000053780" description="Uracil phosphoribosyltransferase">
    <location>
        <begin position="1"/>
        <end position="208"/>
    </location>
</feature>
<feature type="binding site" evidence="1">
    <location>
        <position position="78"/>
    </location>
    <ligand>
        <name>5-phospho-alpha-D-ribose 1-diphosphate</name>
        <dbReference type="ChEBI" id="CHEBI:58017"/>
    </ligand>
</feature>
<feature type="binding site" evidence="1">
    <location>
        <position position="103"/>
    </location>
    <ligand>
        <name>5-phospho-alpha-D-ribose 1-diphosphate</name>
        <dbReference type="ChEBI" id="CHEBI:58017"/>
    </ligand>
</feature>
<feature type="binding site" evidence="1">
    <location>
        <begin position="130"/>
        <end position="138"/>
    </location>
    <ligand>
        <name>5-phospho-alpha-D-ribose 1-diphosphate</name>
        <dbReference type="ChEBI" id="CHEBI:58017"/>
    </ligand>
</feature>
<feature type="binding site" evidence="1">
    <location>
        <position position="193"/>
    </location>
    <ligand>
        <name>uracil</name>
        <dbReference type="ChEBI" id="CHEBI:17568"/>
    </ligand>
</feature>
<feature type="binding site" evidence="1">
    <location>
        <begin position="198"/>
        <end position="200"/>
    </location>
    <ligand>
        <name>uracil</name>
        <dbReference type="ChEBI" id="CHEBI:17568"/>
    </ligand>
</feature>
<feature type="binding site" evidence="1">
    <location>
        <position position="199"/>
    </location>
    <ligand>
        <name>5-phospho-alpha-D-ribose 1-diphosphate</name>
        <dbReference type="ChEBI" id="CHEBI:58017"/>
    </ligand>
</feature>
<protein>
    <recommendedName>
        <fullName evidence="1">Uracil phosphoribosyltransferase</fullName>
        <ecNumber evidence="1">2.4.2.9</ecNumber>
    </recommendedName>
    <alternativeName>
        <fullName evidence="1">UMP pyrophosphorylase</fullName>
    </alternativeName>
    <alternativeName>
        <fullName evidence="1">UPRTase</fullName>
    </alternativeName>
</protein>
<accession>Q084L0</accession>
<evidence type="ECO:0000255" key="1">
    <source>
        <dbReference type="HAMAP-Rule" id="MF_01218"/>
    </source>
</evidence>
<organism>
    <name type="scientific">Shewanella frigidimarina (strain NCIMB 400)</name>
    <dbReference type="NCBI Taxonomy" id="318167"/>
    <lineage>
        <taxon>Bacteria</taxon>
        <taxon>Pseudomonadati</taxon>
        <taxon>Pseudomonadota</taxon>
        <taxon>Gammaproteobacteria</taxon>
        <taxon>Alteromonadales</taxon>
        <taxon>Shewanellaceae</taxon>
        <taxon>Shewanella</taxon>
    </lineage>
</organism>
<comment type="function">
    <text evidence="1">Catalyzes the conversion of uracil and 5-phospho-alpha-D-ribose 1-diphosphate (PRPP) to UMP and diphosphate.</text>
</comment>
<comment type="catalytic activity">
    <reaction evidence="1">
        <text>UMP + diphosphate = 5-phospho-alpha-D-ribose 1-diphosphate + uracil</text>
        <dbReference type="Rhea" id="RHEA:13017"/>
        <dbReference type="ChEBI" id="CHEBI:17568"/>
        <dbReference type="ChEBI" id="CHEBI:33019"/>
        <dbReference type="ChEBI" id="CHEBI:57865"/>
        <dbReference type="ChEBI" id="CHEBI:58017"/>
        <dbReference type="EC" id="2.4.2.9"/>
    </reaction>
</comment>
<comment type="cofactor">
    <cofactor evidence="1">
        <name>Mg(2+)</name>
        <dbReference type="ChEBI" id="CHEBI:18420"/>
    </cofactor>
    <text evidence="1">Binds 1 Mg(2+) ion per subunit. The magnesium is bound as Mg-PRPP.</text>
</comment>
<comment type="activity regulation">
    <text evidence="1">Allosterically activated by GTP.</text>
</comment>
<comment type="pathway">
    <text evidence="1">Pyrimidine metabolism; UMP biosynthesis via salvage pathway; UMP from uracil: step 1/1.</text>
</comment>
<comment type="similarity">
    <text evidence="1">Belongs to the UPRTase family.</text>
</comment>
<reference key="1">
    <citation type="submission" date="2006-08" db="EMBL/GenBank/DDBJ databases">
        <title>Complete sequence of Shewanella frigidimarina NCIMB 400.</title>
        <authorList>
            <consortium name="US DOE Joint Genome Institute"/>
            <person name="Copeland A."/>
            <person name="Lucas S."/>
            <person name="Lapidus A."/>
            <person name="Barry K."/>
            <person name="Detter J.C."/>
            <person name="Glavina del Rio T."/>
            <person name="Hammon N."/>
            <person name="Israni S."/>
            <person name="Dalin E."/>
            <person name="Tice H."/>
            <person name="Pitluck S."/>
            <person name="Fredrickson J.K."/>
            <person name="Kolker E."/>
            <person name="McCuel L.A."/>
            <person name="DiChristina T."/>
            <person name="Nealson K.H."/>
            <person name="Newman D."/>
            <person name="Tiedje J.M."/>
            <person name="Zhou J."/>
            <person name="Romine M.F."/>
            <person name="Culley D.E."/>
            <person name="Serres M."/>
            <person name="Chertkov O."/>
            <person name="Brettin T."/>
            <person name="Bruce D."/>
            <person name="Han C."/>
            <person name="Tapia R."/>
            <person name="Gilna P."/>
            <person name="Schmutz J."/>
            <person name="Larimer F."/>
            <person name="Land M."/>
            <person name="Hauser L."/>
            <person name="Kyrpides N."/>
            <person name="Mikhailova N."/>
            <person name="Richardson P."/>
        </authorList>
    </citation>
    <scope>NUCLEOTIDE SEQUENCE [LARGE SCALE GENOMIC DNA]</scope>
    <source>
        <strain>NCIMB 400</strain>
    </source>
</reference>
<name>UPP_SHEFN</name>